<keyword id="KW-0903">Direct protein sequencing</keyword>
<keyword id="KW-1015">Disulfide bond</keyword>
<keyword id="KW-0325">Glycoprotein</keyword>
<keyword id="KW-0372">Hormone</keyword>
<keyword id="KW-0964">Secreted</keyword>
<accession>P80663</accession>
<organism>
    <name type="scientific">Struthio camelus</name>
    <name type="common">Common ostrich</name>
    <dbReference type="NCBI Taxonomy" id="8801"/>
    <lineage>
        <taxon>Eukaryota</taxon>
        <taxon>Metazoa</taxon>
        <taxon>Chordata</taxon>
        <taxon>Craniata</taxon>
        <taxon>Vertebrata</taxon>
        <taxon>Euteleostomi</taxon>
        <taxon>Archelosauria</taxon>
        <taxon>Archosauria</taxon>
        <taxon>Dinosauria</taxon>
        <taxon>Saurischia</taxon>
        <taxon>Theropoda</taxon>
        <taxon>Coelurosauria</taxon>
        <taxon>Aves</taxon>
        <taxon>Palaeognathae</taxon>
        <taxon>Struthioniformes</taxon>
        <taxon>Struthionidae</taxon>
        <taxon>Struthio</taxon>
    </lineage>
</organism>
<feature type="chain" id="PRO_0000149038" description="Follitropin subunit beta">
    <location>
        <begin position="1"/>
        <end position="106"/>
    </location>
</feature>
<feature type="glycosylation site" description="N-linked (GlcNAc...) asparagine" evidence="1">
    <location>
        <position position="5"/>
    </location>
</feature>
<feature type="glycosylation site" description="N-linked (GlcNAc...) asparagine" evidence="1">
    <location>
        <position position="22"/>
    </location>
</feature>
<feature type="disulfide bond" evidence="1">
    <location>
        <begin position="1"/>
        <end position="49"/>
    </location>
</feature>
<feature type="disulfide bond" evidence="1">
    <location>
        <begin position="15"/>
        <end position="64"/>
    </location>
</feature>
<feature type="disulfide bond" evidence="1">
    <location>
        <begin position="18"/>
        <end position="102"/>
    </location>
</feature>
<feature type="disulfide bond" evidence="1">
    <location>
        <begin position="26"/>
        <end position="80"/>
    </location>
</feature>
<feature type="disulfide bond" evidence="1">
    <location>
        <begin position="30"/>
        <end position="82"/>
    </location>
</feature>
<feature type="disulfide bond" evidence="1">
    <location>
        <begin position="85"/>
        <end position="92"/>
    </location>
</feature>
<dbReference type="PIR" id="S74084">
    <property type="entry name" value="S74084"/>
</dbReference>
<dbReference type="SMR" id="P80663"/>
<dbReference type="GlyCosmos" id="P80663">
    <property type="glycosylation" value="2 sites, No reported glycans"/>
</dbReference>
<dbReference type="GO" id="GO:0005737">
    <property type="term" value="C:cytoplasm"/>
    <property type="evidence" value="ECO:0007669"/>
    <property type="project" value="TreeGrafter"/>
</dbReference>
<dbReference type="GO" id="GO:0005615">
    <property type="term" value="C:extracellular space"/>
    <property type="evidence" value="ECO:0000250"/>
    <property type="project" value="UniProtKB"/>
</dbReference>
<dbReference type="GO" id="GO:0016914">
    <property type="term" value="C:follicle-stimulating hormone complex"/>
    <property type="evidence" value="ECO:0000250"/>
    <property type="project" value="UniProtKB"/>
</dbReference>
<dbReference type="GO" id="GO:0016913">
    <property type="term" value="F:follicle-stimulating hormone activity"/>
    <property type="evidence" value="ECO:0000250"/>
    <property type="project" value="UniProtKB"/>
</dbReference>
<dbReference type="GO" id="GO:0035938">
    <property type="term" value="P:estradiol secretion"/>
    <property type="evidence" value="ECO:0000315"/>
    <property type="project" value="AgBase"/>
</dbReference>
<dbReference type="GO" id="GO:0042699">
    <property type="term" value="P:follicle-stimulating hormone signaling pathway"/>
    <property type="evidence" value="ECO:0007669"/>
    <property type="project" value="TreeGrafter"/>
</dbReference>
<dbReference type="GO" id="GO:0007186">
    <property type="term" value="P:G protein-coupled receptor signaling pathway"/>
    <property type="evidence" value="ECO:0000250"/>
    <property type="project" value="UniProtKB"/>
</dbReference>
<dbReference type="GO" id="GO:0010469">
    <property type="term" value="P:regulation of signaling receptor activity"/>
    <property type="evidence" value="ECO:0000250"/>
    <property type="project" value="UniProtKB"/>
</dbReference>
<dbReference type="CDD" id="cd00069">
    <property type="entry name" value="GHB_like"/>
    <property type="match status" value="1"/>
</dbReference>
<dbReference type="FunFam" id="2.10.90.10:FF:000007">
    <property type="entry name" value="Luteinizing hormone beta subunit"/>
    <property type="match status" value="1"/>
</dbReference>
<dbReference type="Gene3D" id="2.10.90.10">
    <property type="entry name" value="Cystine-knot cytokines"/>
    <property type="match status" value="1"/>
</dbReference>
<dbReference type="InterPro" id="IPR029034">
    <property type="entry name" value="Cystine-knot_cytokine"/>
</dbReference>
<dbReference type="InterPro" id="IPR006208">
    <property type="entry name" value="Glyco_hormone_CN"/>
</dbReference>
<dbReference type="InterPro" id="IPR001545">
    <property type="entry name" value="Gonadotropin_bsu"/>
</dbReference>
<dbReference type="InterPro" id="IPR018245">
    <property type="entry name" value="Gonadotropin_bsu_CS"/>
</dbReference>
<dbReference type="PANTHER" id="PTHR11515:SF17">
    <property type="entry name" value="FOLLITROPIN SUBUNIT BETA"/>
    <property type="match status" value="1"/>
</dbReference>
<dbReference type="PANTHER" id="PTHR11515">
    <property type="entry name" value="GLYCOPROTEIN HORMONE BETA CHAIN"/>
    <property type="match status" value="1"/>
</dbReference>
<dbReference type="Pfam" id="PF00007">
    <property type="entry name" value="Cys_knot"/>
    <property type="match status" value="1"/>
</dbReference>
<dbReference type="SMART" id="SM00068">
    <property type="entry name" value="GHB"/>
    <property type="match status" value="1"/>
</dbReference>
<dbReference type="SUPFAM" id="SSF57501">
    <property type="entry name" value="Cystine-knot cytokines"/>
    <property type="match status" value="1"/>
</dbReference>
<dbReference type="PROSITE" id="PS00261">
    <property type="entry name" value="GLYCO_HORMONE_BETA_1"/>
    <property type="match status" value="1"/>
</dbReference>
<dbReference type="PROSITE" id="PS00689">
    <property type="entry name" value="GLYCO_HORMONE_BETA_2"/>
    <property type="match status" value="1"/>
</dbReference>
<name>FSHB_STRCA</name>
<comment type="function">
    <text evidence="1">Together with the alpha chain CGA constitutes follitropin, the follicle-stimulating hormone, and provides its biological specificity to the hormone heterodimer. Binds FSHR, a G protein-coupled receptor, on target cells to activate downstream signaling pathways. Follitropin is involved in follicle development and spermatogenesis in reproductive organs.</text>
</comment>
<comment type="subunit">
    <text evidence="1">Heterodimer. The active follitropin is a heterodimer composed of an alpha chain/CGA shared with other hormones and a unique beta chain/FSHB shown here.</text>
</comment>
<comment type="subcellular location">
    <subcellularLocation>
        <location evidence="1">Secreted</location>
    </subcellularLocation>
    <text evidence="1">Efficient secretion requires dimerization with CGA.</text>
</comment>
<comment type="similarity">
    <text evidence="2">Belongs to the glycoprotein hormones subunit beta family.</text>
</comment>
<sequence>CELTNITIAVEREECELCITVNATWCSGYCFTRDPVYKYPPVSEVQQTCTFKEVVYETVKIPGCRDHAESLYSYPVATECHCETCDTDSTDCTVRGLGPSYCSFNQ</sequence>
<gene>
    <name type="primary">FSHB</name>
</gene>
<proteinExistence type="evidence at protein level"/>
<evidence type="ECO:0000250" key="1">
    <source>
        <dbReference type="UniProtKB" id="P01225"/>
    </source>
</evidence>
<evidence type="ECO:0000305" key="2"/>
<protein>
    <recommendedName>
        <fullName>Follitropin subunit beta</fullName>
    </recommendedName>
    <alternativeName>
        <fullName>Follicle-stimulating hormone beta subunit</fullName>
        <shortName>FSH-B</shortName>
        <shortName>FSH-beta</shortName>
    </alternativeName>
    <alternativeName>
        <fullName>Follitropin beta chain</fullName>
    </alternativeName>
</protein>
<reference key="1">
    <citation type="journal article" date="1996" name="Eur. J. Biochem.">
        <title>Complete amino acid sequences of follitropin and lutropin in the ostrich, Struthio camelus.</title>
        <authorList>
            <person name="Koide Y."/>
            <person name="Papkoff H."/>
            <person name="Kawauchi H."/>
        </authorList>
    </citation>
    <scope>PROTEIN SEQUENCE</scope>
</reference>